<feature type="chain" id="PRO_0000355809" description="Large ribosomal subunit protein uL14">
    <location>
        <begin position="1"/>
        <end position="122"/>
    </location>
</feature>
<protein>
    <recommendedName>
        <fullName evidence="1">Large ribosomal subunit protein uL14</fullName>
    </recommendedName>
    <alternativeName>
        <fullName evidence="2">50S ribosomal protein L14</fullName>
    </alternativeName>
</protein>
<dbReference type="EMBL" id="CU234118">
    <property type="protein sequence ID" value="CAL76878.1"/>
    <property type="status" value="ALT_INIT"/>
    <property type="molecule type" value="Genomic_DNA"/>
</dbReference>
<dbReference type="RefSeq" id="WP_006611848.1">
    <property type="nucleotide sequence ID" value="NC_009445.1"/>
</dbReference>
<dbReference type="SMR" id="A4YSK2"/>
<dbReference type="STRING" id="114615.BRADO3076"/>
<dbReference type="KEGG" id="bra:BRADO3076"/>
<dbReference type="eggNOG" id="COG0093">
    <property type="taxonomic scope" value="Bacteria"/>
</dbReference>
<dbReference type="HOGENOM" id="CLU_095071_2_1_5"/>
<dbReference type="OrthoDB" id="9806379at2"/>
<dbReference type="Proteomes" id="UP000001994">
    <property type="component" value="Chromosome"/>
</dbReference>
<dbReference type="GO" id="GO:0022625">
    <property type="term" value="C:cytosolic large ribosomal subunit"/>
    <property type="evidence" value="ECO:0007669"/>
    <property type="project" value="TreeGrafter"/>
</dbReference>
<dbReference type="GO" id="GO:0070180">
    <property type="term" value="F:large ribosomal subunit rRNA binding"/>
    <property type="evidence" value="ECO:0007669"/>
    <property type="project" value="TreeGrafter"/>
</dbReference>
<dbReference type="GO" id="GO:0003735">
    <property type="term" value="F:structural constituent of ribosome"/>
    <property type="evidence" value="ECO:0007669"/>
    <property type="project" value="InterPro"/>
</dbReference>
<dbReference type="GO" id="GO:0006412">
    <property type="term" value="P:translation"/>
    <property type="evidence" value="ECO:0007669"/>
    <property type="project" value="UniProtKB-UniRule"/>
</dbReference>
<dbReference type="CDD" id="cd00337">
    <property type="entry name" value="Ribosomal_uL14"/>
    <property type="match status" value="1"/>
</dbReference>
<dbReference type="FunFam" id="2.40.150.20:FF:000001">
    <property type="entry name" value="50S ribosomal protein L14"/>
    <property type="match status" value="1"/>
</dbReference>
<dbReference type="Gene3D" id="2.40.150.20">
    <property type="entry name" value="Ribosomal protein L14"/>
    <property type="match status" value="1"/>
</dbReference>
<dbReference type="HAMAP" id="MF_01367">
    <property type="entry name" value="Ribosomal_uL14"/>
    <property type="match status" value="1"/>
</dbReference>
<dbReference type="InterPro" id="IPR000218">
    <property type="entry name" value="Ribosomal_uL14"/>
</dbReference>
<dbReference type="InterPro" id="IPR005745">
    <property type="entry name" value="Ribosomal_uL14_bac-type"/>
</dbReference>
<dbReference type="InterPro" id="IPR019972">
    <property type="entry name" value="Ribosomal_uL14_CS"/>
</dbReference>
<dbReference type="InterPro" id="IPR036853">
    <property type="entry name" value="Ribosomal_uL14_sf"/>
</dbReference>
<dbReference type="NCBIfam" id="TIGR01067">
    <property type="entry name" value="rplN_bact"/>
    <property type="match status" value="1"/>
</dbReference>
<dbReference type="PANTHER" id="PTHR11761">
    <property type="entry name" value="50S/60S RIBOSOMAL PROTEIN L14/L23"/>
    <property type="match status" value="1"/>
</dbReference>
<dbReference type="PANTHER" id="PTHR11761:SF3">
    <property type="entry name" value="LARGE RIBOSOMAL SUBUNIT PROTEIN UL14M"/>
    <property type="match status" value="1"/>
</dbReference>
<dbReference type="Pfam" id="PF00238">
    <property type="entry name" value="Ribosomal_L14"/>
    <property type="match status" value="1"/>
</dbReference>
<dbReference type="SMART" id="SM01374">
    <property type="entry name" value="Ribosomal_L14"/>
    <property type="match status" value="1"/>
</dbReference>
<dbReference type="SUPFAM" id="SSF50193">
    <property type="entry name" value="Ribosomal protein L14"/>
    <property type="match status" value="1"/>
</dbReference>
<dbReference type="PROSITE" id="PS00049">
    <property type="entry name" value="RIBOSOMAL_L14"/>
    <property type="match status" value="1"/>
</dbReference>
<organism>
    <name type="scientific">Bradyrhizobium sp. (strain ORS 278)</name>
    <dbReference type="NCBI Taxonomy" id="114615"/>
    <lineage>
        <taxon>Bacteria</taxon>
        <taxon>Pseudomonadati</taxon>
        <taxon>Pseudomonadota</taxon>
        <taxon>Alphaproteobacteria</taxon>
        <taxon>Hyphomicrobiales</taxon>
        <taxon>Nitrobacteraceae</taxon>
        <taxon>Bradyrhizobium</taxon>
    </lineage>
</organism>
<sequence>MIQMQTNLDVADNSGARRVMCIKVLGGSKRRYATVGDIIVVSIKEAIPRGKVKKGDVMKAVVVRVRKDIRRADGSVIRFDRNAAVLINNQSEPVGTRIFGPVPRELRAKNHMKIISLAPEVL</sequence>
<evidence type="ECO:0000255" key="1">
    <source>
        <dbReference type="HAMAP-Rule" id="MF_01367"/>
    </source>
</evidence>
<evidence type="ECO:0000305" key="2"/>
<name>RL14_BRASO</name>
<reference key="1">
    <citation type="journal article" date="2007" name="Science">
        <title>Legumes symbioses: absence of nod genes in photosynthetic bradyrhizobia.</title>
        <authorList>
            <person name="Giraud E."/>
            <person name="Moulin L."/>
            <person name="Vallenet D."/>
            <person name="Barbe V."/>
            <person name="Cytryn E."/>
            <person name="Avarre J.-C."/>
            <person name="Jaubert M."/>
            <person name="Simon D."/>
            <person name="Cartieaux F."/>
            <person name="Prin Y."/>
            <person name="Bena G."/>
            <person name="Hannibal L."/>
            <person name="Fardoux J."/>
            <person name="Kojadinovic M."/>
            <person name="Vuillet L."/>
            <person name="Lajus A."/>
            <person name="Cruveiller S."/>
            <person name="Rouy Z."/>
            <person name="Mangenot S."/>
            <person name="Segurens B."/>
            <person name="Dossat C."/>
            <person name="Franck W.L."/>
            <person name="Chang W.-S."/>
            <person name="Saunders E."/>
            <person name="Bruce D."/>
            <person name="Richardson P."/>
            <person name="Normand P."/>
            <person name="Dreyfus B."/>
            <person name="Pignol D."/>
            <person name="Stacey G."/>
            <person name="Emerich D."/>
            <person name="Vermeglio A."/>
            <person name="Medigue C."/>
            <person name="Sadowsky M."/>
        </authorList>
    </citation>
    <scope>NUCLEOTIDE SEQUENCE [LARGE SCALE GENOMIC DNA]</scope>
    <source>
        <strain>ORS 278</strain>
    </source>
</reference>
<keyword id="KW-1185">Reference proteome</keyword>
<keyword id="KW-0687">Ribonucleoprotein</keyword>
<keyword id="KW-0689">Ribosomal protein</keyword>
<keyword id="KW-0694">RNA-binding</keyword>
<keyword id="KW-0699">rRNA-binding</keyword>
<proteinExistence type="inferred from homology"/>
<comment type="function">
    <text evidence="1">Binds to 23S rRNA. Forms part of two intersubunit bridges in the 70S ribosome.</text>
</comment>
<comment type="subunit">
    <text evidence="1">Part of the 50S ribosomal subunit. Forms a cluster with proteins L3 and L19. In the 70S ribosome, L14 and L19 interact and together make contacts with the 16S rRNA in bridges B5 and B8.</text>
</comment>
<comment type="similarity">
    <text evidence="1">Belongs to the universal ribosomal protein uL14 family.</text>
</comment>
<comment type="sequence caution" evidence="2">
    <conflict type="erroneous initiation">
        <sequence resource="EMBL-CDS" id="CAL76878"/>
    </conflict>
</comment>
<accession>A4YSK2</accession>
<gene>
    <name evidence="1" type="primary">rplN</name>
    <name type="ordered locus">BRADO3076</name>
</gene>